<comment type="similarity">
    <text evidence="1">Belongs to the bacterial ribosomal protein bL32 family.</text>
</comment>
<protein>
    <recommendedName>
        <fullName evidence="1">Large ribosomal subunit protein bL32</fullName>
    </recommendedName>
    <alternativeName>
        <fullName evidence="2">50S ribosomal protein L32</fullName>
    </alternativeName>
</protein>
<feature type="chain" id="PRO_0000172379" description="Large ribosomal subunit protein bL32">
    <location>
        <begin position="1"/>
        <end position="68"/>
    </location>
</feature>
<proteinExistence type="inferred from homology"/>
<keyword id="KW-0687">Ribonucleoprotein</keyword>
<keyword id="KW-0689">Ribosomal protein</keyword>
<gene>
    <name evidence="1" type="primary">rpmF</name>
    <name type="ordered locus">PAM_198</name>
</gene>
<sequence>MAVPFRRTGKTAKRKRRTHYKLSNPALVLCKETNTFTLSHRVTKNSGYYKGKLILENKPSKAQKTTDN</sequence>
<dbReference type="EMBL" id="AP006628">
    <property type="protein sequence ID" value="BAD04283.1"/>
    <property type="molecule type" value="Genomic_DNA"/>
</dbReference>
<dbReference type="SMR" id="Q6YR20"/>
<dbReference type="STRING" id="262768.PAM_198"/>
<dbReference type="KEGG" id="poy:PAM_198"/>
<dbReference type="eggNOG" id="COG0333">
    <property type="taxonomic scope" value="Bacteria"/>
</dbReference>
<dbReference type="HOGENOM" id="CLU_129084_2_3_14"/>
<dbReference type="BioCyc" id="OYEL262768:G1G26-242-MONOMER"/>
<dbReference type="Proteomes" id="UP000002523">
    <property type="component" value="Chromosome"/>
</dbReference>
<dbReference type="GO" id="GO:0015934">
    <property type="term" value="C:large ribosomal subunit"/>
    <property type="evidence" value="ECO:0007669"/>
    <property type="project" value="InterPro"/>
</dbReference>
<dbReference type="GO" id="GO:0003735">
    <property type="term" value="F:structural constituent of ribosome"/>
    <property type="evidence" value="ECO:0007669"/>
    <property type="project" value="InterPro"/>
</dbReference>
<dbReference type="GO" id="GO:0006412">
    <property type="term" value="P:translation"/>
    <property type="evidence" value="ECO:0007669"/>
    <property type="project" value="UniProtKB-UniRule"/>
</dbReference>
<dbReference type="HAMAP" id="MF_00340">
    <property type="entry name" value="Ribosomal_bL32"/>
    <property type="match status" value="1"/>
</dbReference>
<dbReference type="InterPro" id="IPR002677">
    <property type="entry name" value="Ribosomal_bL32"/>
</dbReference>
<dbReference type="InterPro" id="IPR044957">
    <property type="entry name" value="Ribosomal_bL32_bact"/>
</dbReference>
<dbReference type="InterPro" id="IPR011332">
    <property type="entry name" value="Ribosomal_zn-bd"/>
</dbReference>
<dbReference type="NCBIfam" id="TIGR01031">
    <property type="entry name" value="rpmF_bact"/>
    <property type="match status" value="1"/>
</dbReference>
<dbReference type="PANTHER" id="PTHR35534">
    <property type="entry name" value="50S RIBOSOMAL PROTEIN L32"/>
    <property type="match status" value="1"/>
</dbReference>
<dbReference type="PANTHER" id="PTHR35534:SF1">
    <property type="entry name" value="LARGE RIBOSOMAL SUBUNIT PROTEIN BL32"/>
    <property type="match status" value="1"/>
</dbReference>
<dbReference type="Pfam" id="PF01783">
    <property type="entry name" value="Ribosomal_L32p"/>
    <property type="match status" value="1"/>
</dbReference>
<dbReference type="SUPFAM" id="SSF57829">
    <property type="entry name" value="Zn-binding ribosomal proteins"/>
    <property type="match status" value="1"/>
</dbReference>
<name>RL32_ONYPE</name>
<reference key="1">
    <citation type="journal article" date="2004" name="Nat. Genet.">
        <title>Reductive evolution suggested from the complete genome sequence of a plant-pathogenic phytoplasma.</title>
        <authorList>
            <person name="Oshima K."/>
            <person name="Kakizawa S."/>
            <person name="Nishigawa H."/>
            <person name="Jung H.-Y."/>
            <person name="Wei W."/>
            <person name="Suzuki S."/>
            <person name="Arashida R."/>
            <person name="Nakata D."/>
            <person name="Miyata S."/>
            <person name="Ugaki M."/>
            <person name="Namba S."/>
        </authorList>
    </citation>
    <scope>NUCLEOTIDE SEQUENCE [LARGE SCALE GENOMIC DNA]</scope>
    <source>
        <strain>OY-M</strain>
    </source>
</reference>
<organism>
    <name type="scientific">Onion yellows phytoplasma (strain OY-M)</name>
    <dbReference type="NCBI Taxonomy" id="262768"/>
    <lineage>
        <taxon>Bacteria</taxon>
        <taxon>Bacillati</taxon>
        <taxon>Mycoplasmatota</taxon>
        <taxon>Mollicutes</taxon>
        <taxon>Acholeplasmatales</taxon>
        <taxon>Acholeplasmataceae</taxon>
        <taxon>Candidatus Phytoplasma</taxon>
        <taxon>16SrI (Aster yellows group)</taxon>
    </lineage>
</organism>
<accession>Q6YR20</accession>
<evidence type="ECO:0000255" key="1">
    <source>
        <dbReference type="HAMAP-Rule" id="MF_00340"/>
    </source>
</evidence>
<evidence type="ECO:0000305" key="2"/>